<organism>
    <name type="scientific">Burkholderia mallei (strain NCTC 10247)</name>
    <dbReference type="NCBI Taxonomy" id="320389"/>
    <lineage>
        <taxon>Bacteria</taxon>
        <taxon>Pseudomonadati</taxon>
        <taxon>Pseudomonadota</taxon>
        <taxon>Betaproteobacteria</taxon>
        <taxon>Burkholderiales</taxon>
        <taxon>Burkholderiaceae</taxon>
        <taxon>Burkholderia</taxon>
        <taxon>pseudomallei group</taxon>
    </lineage>
</organism>
<dbReference type="EMBL" id="CP000548">
    <property type="protein sequence ID" value="ABO07010.1"/>
    <property type="molecule type" value="Genomic_DNA"/>
</dbReference>
<dbReference type="RefSeq" id="WP_004186076.1">
    <property type="nucleotide sequence ID" value="NZ_CP007802.1"/>
</dbReference>
<dbReference type="SMR" id="A3MMM6"/>
<dbReference type="GeneID" id="93061170"/>
<dbReference type="KEGG" id="bmaz:BM44_1238"/>
<dbReference type="KEGG" id="bmn:BMA10247_1979"/>
<dbReference type="PATRIC" id="fig|320389.8.peg.1383"/>
<dbReference type="GO" id="GO:0051301">
    <property type="term" value="P:cell division"/>
    <property type="evidence" value="ECO:0007669"/>
    <property type="project" value="UniProtKB-KW"/>
</dbReference>
<dbReference type="GO" id="GO:0032955">
    <property type="term" value="P:regulation of division septum assembly"/>
    <property type="evidence" value="ECO:0007669"/>
    <property type="project" value="InterPro"/>
</dbReference>
<dbReference type="FunFam" id="3.30.1070.10:FF:000001">
    <property type="entry name" value="Cell division topological specificity factor"/>
    <property type="match status" value="1"/>
</dbReference>
<dbReference type="Gene3D" id="3.30.1070.10">
    <property type="entry name" value="Cell division topological specificity factor MinE"/>
    <property type="match status" value="1"/>
</dbReference>
<dbReference type="HAMAP" id="MF_00262">
    <property type="entry name" value="MinE"/>
    <property type="match status" value="1"/>
</dbReference>
<dbReference type="InterPro" id="IPR005527">
    <property type="entry name" value="MinE"/>
</dbReference>
<dbReference type="InterPro" id="IPR036707">
    <property type="entry name" value="MinE_sf"/>
</dbReference>
<dbReference type="NCBIfam" id="TIGR01215">
    <property type="entry name" value="minE"/>
    <property type="match status" value="1"/>
</dbReference>
<dbReference type="NCBIfam" id="NF001422">
    <property type="entry name" value="PRK00296.1"/>
    <property type="match status" value="1"/>
</dbReference>
<dbReference type="NCBIfam" id="NF010595">
    <property type="entry name" value="PRK13989.1"/>
    <property type="match status" value="1"/>
</dbReference>
<dbReference type="Pfam" id="PF03776">
    <property type="entry name" value="MinE"/>
    <property type="match status" value="1"/>
</dbReference>
<dbReference type="SUPFAM" id="SSF55229">
    <property type="entry name" value="Cell division protein MinE topological specificity domain"/>
    <property type="match status" value="1"/>
</dbReference>
<sequence>MSILSFLLGEKKKSAAVAKERLQLIIAHERVGGRPPADYLPALQKELVAVISKYVKISNDDIRVSLERQDDLEVLEVKIEIPQA</sequence>
<gene>
    <name evidence="1" type="primary">minE</name>
    <name type="ordered locus">BMA10247_1979</name>
</gene>
<evidence type="ECO:0000255" key="1">
    <source>
        <dbReference type="HAMAP-Rule" id="MF_00262"/>
    </source>
</evidence>
<keyword id="KW-0131">Cell cycle</keyword>
<keyword id="KW-0132">Cell division</keyword>
<accession>A3MMM6</accession>
<proteinExistence type="inferred from homology"/>
<feature type="chain" id="PRO_1000047774" description="Cell division topological specificity factor">
    <location>
        <begin position="1"/>
        <end position="84"/>
    </location>
</feature>
<protein>
    <recommendedName>
        <fullName evidence="1">Cell division topological specificity factor</fullName>
    </recommendedName>
</protein>
<reference key="1">
    <citation type="journal article" date="2010" name="Genome Biol. Evol.">
        <title>Continuing evolution of Burkholderia mallei through genome reduction and large-scale rearrangements.</title>
        <authorList>
            <person name="Losada L."/>
            <person name="Ronning C.M."/>
            <person name="DeShazer D."/>
            <person name="Woods D."/>
            <person name="Fedorova N."/>
            <person name="Kim H.S."/>
            <person name="Shabalina S.A."/>
            <person name="Pearson T.R."/>
            <person name="Brinkac L."/>
            <person name="Tan P."/>
            <person name="Nandi T."/>
            <person name="Crabtree J."/>
            <person name="Badger J."/>
            <person name="Beckstrom-Sternberg S."/>
            <person name="Saqib M."/>
            <person name="Schutzer S.E."/>
            <person name="Keim P."/>
            <person name="Nierman W.C."/>
        </authorList>
    </citation>
    <scope>NUCLEOTIDE SEQUENCE [LARGE SCALE GENOMIC DNA]</scope>
    <source>
        <strain>NCTC 10247</strain>
    </source>
</reference>
<name>MINE_BURM7</name>
<comment type="function">
    <text evidence="1">Prevents the cell division inhibition by proteins MinC and MinD at internal division sites while permitting inhibition at polar sites. This ensures cell division at the proper site by restricting the formation of a division septum at the midpoint of the long axis of the cell.</text>
</comment>
<comment type="similarity">
    <text evidence="1">Belongs to the MinE family.</text>
</comment>